<accession>A1R0K4</accession>
<organism>
    <name type="scientific">Borrelia turicatae (strain 91E135)</name>
    <dbReference type="NCBI Taxonomy" id="314724"/>
    <lineage>
        <taxon>Bacteria</taxon>
        <taxon>Pseudomonadati</taxon>
        <taxon>Spirochaetota</taxon>
        <taxon>Spirochaetia</taxon>
        <taxon>Spirochaetales</taxon>
        <taxon>Borreliaceae</taxon>
        <taxon>Borrelia</taxon>
    </lineage>
</organism>
<sequence length="327" mass="35075">MHTFKDSLNITVSSGSGGAGCVSFLRERFKAKGGPDGGDGGRGGNVVFKVKPDLKTLSFYKNGQKLAANNGKPGMGSRKSGASGEDLVIFVPPNTRVYDVFTDSMLFELQNFDDEVIALKGGRGGLGNVNFKSSTKRTPRFAQPGESGTTLDLRLELVLIADIGLVGLPNAGKSSLISTITASRSKVGNYPFTTKVPHLGVLKSSYEDLVIADVPGIIEGASRGMGLGFEFLRHISKTKILVFLIDVASNDFMSTYSILVNELSVYDVGLSSKKRIIVANKLDLEGAIENFNQLKRALDGEKVLGISIYDNRGIDELVNELFALSRI</sequence>
<gene>
    <name evidence="1" type="primary">obg</name>
    <name type="ordered locus">BT0781</name>
</gene>
<reference key="1">
    <citation type="submission" date="2004-12" db="EMBL/GenBank/DDBJ databases">
        <title>The genome sequence of Borrelia hermsii and Borrelia turicatae: comparative analysis of two agents of endemic N. America relapsing fever.</title>
        <authorList>
            <person name="Porcella S.F."/>
            <person name="Raffel S.J."/>
            <person name="Schrumpf M.E."/>
            <person name="Montgomery B."/>
            <person name="Smith T."/>
            <person name="Schwan T.G."/>
        </authorList>
    </citation>
    <scope>NUCLEOTIDE SEQUENCE [LARGE SCALE GENOMIC DNA]</scope>
    <source>
        <strain>91E135</strain>
    </source>
</reference>
<name>OBG_BORT9</name>
<evidence type="ECO:0000255" key="1">
    <source>
        <dbReference type="HAMAP-Rule" id="MF_01454"/>
    </source>
</evidence>
<evidence type="ECO:0000255" key="2">
    <source>
        <dbReference type="PROSITE-ProRule" id="PRU01231"/>
    </source>
</evidence>
<feature type="chain" id="PRO_0000385760" description="GTPase Obg">
    <location>
        <begin position="1"/>
        <end position="327"/>
    </location>
</feature>
<feature type="domain" description="Obg" evidence="2">
    <location>
        <begin position="2"/>
        <end position="160"/>
    </location>
</feature>
<feature type="domain" description="OBG-type G" evidence="1">
    <location>
        <begin position="161"/>
        <end position="326"/>
    </location>
</feature>
<feature type="binding site" evidence="1">
    <location>
        <begin position="167"/>
        <end position="174"/>
    </location>
    <ligand>
        <name>GTP</name>
        <dbReference type="ChEBI" id="CHEBI:37565"/>
    </ligand>
</feature>
<feature type="binding site" evidence="1">
    <location>
        <position position="174"/>
    </location>
    <ligand>
        <name>Mg(2+)</name>
        <dbReference type="ChEBI" id="CHEBI:18420"/>
    </ligand>
</feature>
<feature type="binding site" evidence="1">
    <location>
        <begin position="192"/>
        <end position="196"/>
    </location>
    <ligand>
        <name>GTP</name>
        <dbReference type="ChEBI" id="CHEBI:37565"/>
    </ligand>
</feature>
<feature type="binding site" evidence="1">
    <location>
        <position position="194"/>
    </location>
    <ligand>
        <name>Mg(2+)</name>
        <dbReference type="ChEBI" id="CHEBI:18420"/>
    </ligand>
</feature>
<feature type="binding site" evidence="1">
    <location>
        <begin position="213"/>
        <end position="216"/>
    </location>
    <ligand>
        <name>GTP</name>
        <dbReference type="ChEBI" id="CHEBI:37565"/>
    </ligand>
</feature>
<feature type="binding site" evidence="1">
    <location>
        <begin position="280"/>
        <end position="283"/>
    </location>
    <ligand>
        <name>GTP</name>
        <dbReference type="ChEBI" id="CHEBI:37565"/>
    </ligand>
</feature>
<feature type="binding site" evidence="1">
    <location>
        <begin position="307"/>
        <end position="309"/>
    </location>
    <ligand>
        <name>GTP</name>
        <dbReference type="ChEBI" id="CHEBI:37565"/>
    </ligand>
</feature>
<comment type="function">
    <text evidence="1">An essential GTPase which binds GTP, GDP and possibly (p)ppGpp with moderate affinity, with high nucleotide exchange rates and a fairly low GTP hydrolysis rate. Plays a role in control of the cell cycle, stress response, ribosome biogenesis and in those bacteria that undergo differentiation, in morphogenesis control.</text>
</comment>
<comment type="cofactor">
    <cofactor evidence="1">
        <name>Mg(2+)</name>
        <dbReference type="ChEBI" id="CHEBI:18420"/>
    </cofactor>
</comment>
<comment type="subunit">
    <text evidence="1">Monomer.</text>
</comment>
<comment type="subcellular location">
    <subcellularLocation>
        <location evidence="1">Cytoplasm</location>
    </subcellularLocation>
</comment>
<comment type="similarity">
    <text evidence="1">Belongs to the TRAFAC class OBG-HflX-like GTPase superfamily. OBG GTPase family.</text>
</comment>
<keyword id="KW-0963">Cytoplasm</keyword>
<keyword id="KW-0342">GTP-binding</keyword>
<keyword id="KW-0378">Hydrolase</keyword>
<keyword id="KW-0460">Magnesium</keyword>
<keyword id="KW-0479">Metal-binding</keyword>
<keyword id="KW-0547">Nucleotide-binding</keyword>
<keyword id="KW-1185">Reference proteome</keyword>
<proteinExistence type="inferred from homology"/>
<dbReference type="EC" id="3.6.5.-" evidence="1"/>
<dbReference type="EMBL" id="CP000049">
    <property type="protein sequence ID" value="AAX18095.1"/>
    <property type="molecule type" value="Genomic_DNA"/>
</dbReference>
<dbReference type="RefSeq" id="WP_011772713.1">
    <property type="nucleotide sequence ID" value="NC_008710.1"/>
</dbReference>
<dbReference type="SMR" id="A1R0K4"/>
<dbReference type="KEGG" id="btu:BT0781"/>
<dbReference type="eggNOG" id="COG0536">
    <property type="taxonomic scope" value="Bacteria"/>
</dbReference>
<dbReference type="HOGENOM" id="CLU_011747_2_0_12"/>
<dbReference type="Proteomes" id="UP000001205">
    <property type="component" value="Chromosome"/>
</dbReference>
<dbReference type="GO" id="GO:0005737">
    <property type="term" value="C:cytoplasm"/>
    <property type="evidence" value="ECO:0007669"/>
    <property type="project" value="UniProtKB-SubCell"/>
</dbReference>
<dbReference type="GO" id="GO:0005525">
    <property type="term" value="F:GTP binding"/>
    <property type="evidence" value="ECO:0007669"/>
    <property type="project" value="UniProtKB-UniRule"/>
</dbReference>
<dbReference type="GO" id="GO:0003924">
    <property type="term" value="F:GTPase activity"/>
    <property type="evidence" value="ECO:0007669"/>
    <property type="project" value="UniProtKB-UniRule"/>
</dbReference>
<dbReference type="GO" id="GO:0000287">
    <property type="term" value="F:magnesium ion binding"/>
    <property type="evidence" value="ECO:0007669"/>
    <property type="project" value="InterPro"/>
</dbReference>
<dbReference type="GO" id="GO:0042254">
    <property type="term" value="P:ribosome biogenesis"/>
    <property type="evidence" value="ECO:0007669"/>
    <property type="project" value="UniProtKB-UniRule"/>
</dbReference>
<dbReference type="CDD" id="cd01898">
    <property type="entry name" value="Obg"/>
    <property type="match status" value="1"/>
</dbReference>
<dbReference type="FunFam" id="2.70.210.12:FF:000001">
    <property type="entry name" value="GTPase Obg"/>
    <property type="match status" value="1"/>
</dbReference>
<dbReference type="Gene3D" id="2.70.210.12">
    <property type="entry name" value="GTP1/OBG domain"/>
    <property type="match status" value="1"/>
</dbReference>
<dbReference type="Gene3D" id="3.40.50.300">
    <property type="entry name" value="P-loop containing nucleotide triphosphate hydrolases"/>
    <property type="match status" value="1"/>
</dbReference>
<dbReference type="HAMAP" id="MF_01454">
    <property type="entry name" value="GTPase_Obg"/>
    <property type="match status" value="1"/>
</dbReference>
<dbReference type="InterPro" id="IPR031167">
    <property type="entry name" value="G_OBG"/>
</dbReference>
<dbReference type="InterPro" id="IPR006073">
    <property type="entry name" value="GTP-bd"/>
</dbReference>
<dbReference type="InterPro" id="IPR014100">
    <property type="entry name" value="GTP-bd_Obg/CgtA"/>
</dbReference>
<dbReference type="InterPro" id="IPR006074">
    <property type="entry name" value="GTP1-OBG_CS"/>
</dbReference>
<dbReference type="InterPro" id="IPR006169">
    <property type="entry name" value="GTP1_OBG_dom"/>
</dbReference>
<dbReference type="InterPro" id="IPR036726">
    <property type="entry name" value="GTP1_OBG_dom_sf"/>
</dbReference>
<dbReference type="InterPro" id="IPR045086">
    <property type="entry name" value="OBG_GTPase"/>
</dbReference>
<dbReference type="InterPro" id="IPR027417">
    <property type="entry name" value="P-loop_NTPase"/>
</dbReference>
<dbReference type="NCBIfam" id="TIGR02729">
    <property type="entry name" value="Obg_CgtA"/>
    <property type="match status" value="1"/>
</dbReference>
<dbReference type="NCBIfam" id="NF008956">
    <property type="entry name" value="PRK12299.1"/>
    <property type="match status" value="1"/>
</dbReference>
<dbReference type="PANTHER" id="PTHR11702">
    <property type="entry name" value="DEVELOPMENTALLY REGULATED GTP-BINDING PROTEIN-RELATED"/>
    <property type="match status" value="1"/>
</dbReference>
<dbReference type="PANTHER" id="PTHR11702:SF31">
    <property type="entry name" value="MITOCHONDRIAL RIBOSOME-ASSOCIATED GTPASE 2"/>
    <property type="match status" value="1"/>
</dbReference>
<dbReference type="Pfam" id="PF01018">
    <property type="entry name" value="GTP1_OBG"/>
    <property type="match status" value="1"/>
</dbReference>
<dbReference type="Pfam" id="PF01926">
    <property type="entry name" value="MMR_HSR1"/>
    <property type="match status" value="1"/>
</dbReference>
<dbReference type="PIRSF" id="PIRSF002401">
    <property type="entry name" value="GTP_bd_Obg/CgtA"/>
    <property type="match status" value="1"/>
</dbReference>
<dbReference type="PRINTS" id="PR00326">
    <property type="entry name" value="GTP1OBG"/>
</dbReference>
<dbReference type="SUPFAM" id="SSF82051">
    <property type="entry name" value="Obg GTP-binding protein N-terminal domain"/>
    <property type="match status" value="1"/>
</dbReference>
<dbReference type="SUPFAM" id="SSF52540">
    <property type="entry name" value="P-loop containing nucleoside triphosphate hydrolases"/>
    <property type="match status" value="1"/>
</dbReference>
<dbReference type="PROSITE" id="PS51710">
    <property type="entry name" value="G_OBG"/>
    <property type="match status" value="1"/>
</dbReference>
<dbReference type="PROSITE" id="PS00905">
    <property type="entry name" value="GTP1_OBG"/>
    <property type="match status" value="1"/>
</dbReference>
<dbReference type="PROSITE" id="PS51883">
    <property type="entry name" value="OBG"/>
    <property type="match status" value="1"/>
</dbReference>
<protein>
    <recommendedName>
        <fullName evidence="1">GTPase Obg</fullName>
        <ecNumber evidence="1">3.6.5.-</ecNumber>
    </recommendedName>
    <alternativeName>
        <fullName evidence="1">GTP-binding protein Obg</fullName>
    </alternativeName>
</protein>